<sequence length="282" mass="31290">MKLAVITDSTATLPIDLKQDKAIFSLDIPVIIDDETYFEGRNLSIDDFYQKMADSKNLPKTSQPSLSELDNLLGLLSSKGYTHVIGLFLAGGISGFWQNIQFLAEEHPEIEMAFPDSKITSAPLGSMVKNVLDWSRQGMTFQAILNKLQEQIDGTTAFIMVDDLNHLVKGGRLSNGSALLGNLLSIKPILRFDEEGKIVVYEKVRTEKKAMKRLVEILNDLIADGQYNVSIIHSKAQDKADYLKRLLQDSGYQYDIEEVHFGAVIATHLGEGAIAFGVTPRL</sequence>
<evidence type="ECO:0000250" key="1"/>
<evidence type="ECO:0000250" key="2">
    <source>
        <dbReference type="UniProtKB" id="Q9X1H9"/>
    </source>
</evidence>
<evidence type="ECO:0000255" key="3">
    <source>
        <dbReference type="PROSITE-ProRule" id="PRU00815"/>
    </source>
</evidence>
<protein>
    <recommendedName>
        <fullName>DegV domain-containing protein SPs1267</fullName>
    </recommendedName>
</protein>
<gene>
    <name type="ordered locus">SPs1267</name>
</gene>
<organism>
    <name type="scientific">Streptococcus pyogenes serotype M3 (strain SSI-1)</name>
    <dbReference type="NCBI Taxonomy" id="193567"/>
    <lineage>
        <taxon>Bacteria</taxon>
        <taxon>Bacillati</taxon>
        <taxon>Bacillota</taxon>
        <taxon>Bacilli</taxon>
        <taxon>Lactobacillales</taxon>
        <taxon>Streptococcaceae</taxon>
        <taxon>Streptococcus</taxon>
    </lineage>
</organism>
<feature type="chain" id="PRO_0000411314" description="DegV domain-containing protein SPs1267">
    <location>
        <begin position="1"/>
        <end position="282"/>
    </location>
</feature>
<feature type="domain" description="DegV" evidence="3">
    <location>
        <begin position="3"/>
        <end position="280"/>
    </location>
</feature>
<feature type="binding site" evidence="2">
    <location>
        <position position="61"/>
    </location>
    <ligand>
        <name>hexadecanoate</name>
        <dbReference type="ChEBI" id="CHEBI:7896"/>
    </ligand>
</feature>
<feature type="binding site" evidence="2">
    <location>
        <position position="94"/>
    </location>
    <ligand>
        <name>hexadecanoate</name>
        <dbReference type="ChEBI" id="CHEBI:7896"/>
    </ligand>
</feature>
<dbReference type="EMBL" id="BA000034">
    <property type="protein sequence ID" value="BAC64362.1"/>
    <property type="molecule type" value="Genomic_DNA"/>
</dbReference>
<dbReference type="RefSeq" id="WP_011054370.1">
    <property type="nucleotide sequence ID" value="NC_004606.1"/>
</dbReference>
<dbReference type="SMR" id="P0DA53"/>
<dbReference type="KEGG" id="sps:SPs1267"/>
<dbReference type="HOGENOM" id="CLU_048251_3_1_9"/>
<dbReference type="GO" id="GO:0008289">
    <property type="term" value="F:lipid binding"/>
    <property type="evidence" value="ECO:0007669"/>
    <property type="project" value="UniProtKB-KW"/>
</dbReference>
<dbReference type="Gene3D" id="3.30.1180.10">
    <property type="match status" value="1"/>
</dbReference>
<dbReference type="Gene3D" id="3.40.50.10170">
    <property type="match status" value="1"/>
</dbReference>
<dbReference type="InterPro" id="IPR003797">
    <property type="entry name" value="DegV"/>
</dbReference>
<dbReference type="InterPro" id="IPR043168">
    <property type="entry name" value="DegV_C"/>
</dbReference>
<dbReference type="InterPro" id="IPR050270">
    <property type="entry name" value="DegV_domain_contain"/>
</dbReference>
<dbReference type="NCBIfam" id="TIGR00762">
    <property type="entry name" value="DegV"/>
    <property type="match status" value="1"/>
</dbReference>
<dbReference type="PANTHER" id="PTHR33434">
    <property type="entry name" value="DEGV DOMAIN-CONTAINING PROTEIN DR_1986-RELATED"/>
    <property type="match status" value="1"/>
</dbReference>
<dbReference type="PANTHER" id="PTHR33434:SF2">
    <property type="entry name" value="FATTY ACID-BINDING PROTEIN TM_1468"/>
    <property type="match status" value="1"/>
</dbReference>
<dbReference type="Pfam" id="PF02645">
    <property type="entry name" value="DegV"/>
    <property type="match status" value="1"/>
</dbReference>
<dbReference type="SUPFAM" id="SSF82549">
    <property type="entry name" value="DAK1/DegV-like"/>
    <property type="match status" value="1"/>
</dbReference>
<dbReference type="PROSITE" id="PS51482">
    <property type="entry name" value="DEGV"/>
    <property type="match status" value="1"/>
</dbReference>
<accession>P0DA53</accession>
<accession>Q8K7W6</accession>
<reference key="1">
    <citation type="journal article" date="2003" name="Genome Res.">
        <title>Genome sequence of an M3 strain of Streptococcus pyogenes reveals a large-scale genomic rearrangement in invasive strains and new insights into phage evolution.</title>
        <authorList>
            <person name="Nakagawa I."/>
            <person name="Kurokawa K."/>
            <person name="Yamashita A."/>
            <person name="Nakata M."/>
            <person name="Tomiyasu Y."/>
            <person name="Okahashi N."/>
            <person name="Kawabata S."/>
            <person name="Yamazaki K."/>
            <person name="Shiba T."/>
            <person name="Yasunaga T."/>
            <person name="Hayashi H."/>
            <person name="Hattori M."/>
            <person name="Hamada S."/>
        </authorList>
    </citation>
    <scope>NUCLEOTIDE SEQUENCE [LARGE SCALE GENOMIC DNA]</scope>
    <source>
        <strain>SSI-1</strain>
    </source>
</reference>
<comment type="function">
    <text evidence="1">May bind long-chain fatty acids, such as palmitate, and may play a role in lipid transport or fatty acid metabolism.</text>
</comment>
<keyword id="KW-0446">Lipid-binding</keyword>
<proteinExistence type="inferred from homology"/>
<name>Y586_STRPQ</name>